<accession>Q23924</accession>
<accession>Q54P83</accession>
<accession>Q9NGP1</accession>
<sequence length="912" mass="102855">MSALTQSGSIEKPCTILINYDKGDPPQVNEFKQNFEHGTTEQKIETLKKVILYTINGEPIPQLLMPIILYVMPSNDHTIKKLLLIYWEVIEKTHLGKLKSEMILVCNSLLNDLNHPNEFVRGSTLRFLCKLREAEVLEPLVPSVRSNLENRHAYCRRNAVLAIYNIYSHFDYLIPDAPELIYNFLLQEKDASCKRNAFIMLFNCAPEKAVEYLSSVLDEVPSFGDMLQFIVVELIRKVCKTSPSERSKYIKCIFTLLNSSSPAVKYESAGTLLSLSSAPTAVRGAASAYIDLLCNESDNNVKMIVLDKLIEIKKNHSKIMEELVMDILRALSSPNIDICKKVLNIVLDSVTPKNIDEIILFLKKEINKTQSKEFDKGLEYRHILIRTIHVSSLKYPEVLGNVVPLLMEYLGDSYLPSAVDVVIFLREVVETYPSLRELIIKKLIENLSSIKVSKVYRVAVWVIAEYVTCLEDLQYAMTSITNDLEELLKPKQTEEVILETKAKVKIEKVSIQKLIADGDWYLASCISSSLTKLFFRAEQLNIDNADSNKLKAQVMMIISVLINLSKASQVSTSKSAYERMLSCIQVLIDSNATIKKIWLQDCRDSFANYLKYLLIKQSENKKKTEKEVLVKPNNIINIRQLKSKKAFGPVDTEDDLIKAVGNTGEANKDQNEYSKISQLSGFSDPIYVEAYVRVHQYDIVLDISVFNQTNDTLQNVTLELVTLGDLKICERVPPFTMAPREKTSAKASIKVSSTDNGVIMGTIAFDIAGSVSSMSDKNCVILNELHIDVIDYILPANHQYTDVLFRNHWLEFEWENKIPVNTNITDLVKYVHHISKVTNMGILTPEVHLSNDTGILSANLCAKSVFGEDALANICIEKQADGKISGYIRIRAKVQSIAVTLGEKIGNMGMKA</sequence>
<gene>
    <name type="primary">copb</name>
    <name type="synonym">rcdC</name>
    <name type="synonym">veg125</name>
    <name type="ORF">DDB_G0284735</name>
</gene>
<comment type="function">
    <text evidence="1">The coatomer is a cytosolic protein complex that binds to dilysine motifs and reversibly associates with Golgi non-clathrin-coated vesicles, which further mediate biosynthetic protein transport from the ER, via the Golgi up to the trans Golgi network. Coatomer complex is required for budding from Golgi membranes, and is essential for the retrograde Golgi-to-ER transport of dilysine-tagged proteins (By similarity).</text>
</comment>
<comment type="subunit">
    <text evidence="1">Oligomeric complex that consists of at least the alpha, beta, beta', gamma, delta, epsilon and zeta subunits.</text>
</comment>
<comment type="subcellular location">
    <subcellularLocation>
        <location evidence="1">Cytoplasm</location>
    </subcellularLocation>
    <subcellularLocation>
        <location evidence="2">Golgi apparatus membrane</location>
        <topology evidence="2">Peripheral membrane protein</topology>
        <orientation evidence="2">Cytoplasmic side</orientation>
    </subcellularLocation>
    <subcellularLocation>
        <location evidence="2">Cytoplasmic vesicle</location>
        <location evidence="2">COPI-coated vesicle membrane</location>
        <topology evidence="2">Peripheral membrane protein</topology>
        <orientation evidence="2">Cytoplasmic side</orientation>
    </subcellularLocation>
    <text evidence="1">The coatomer is cytoplasmic or polymerized on the cytoplasmic side of the Golgi, as well as on the vesicles/buds originating from it.</text>
</comment>
<comment type="miscellaneous">
    <text>Brefeldin A does not induce dissociation from the Golgi of the beta-COP and presumably the other coatomer subunits, but DMSO does.</text>
</comment>
<dbReference type="EMBL" id="AF247143">
    <property type="protein sequence ID" value="AAF62179.1"/>
    <property type="molecule type" value="mRNA"/>
</dbReference>
<dbReference type="EMBL" id="AAFI02000071">
    <property type="protein sequence ID" value="EAL65020.1"/>
    <property type="molecule type" value="Genomic_DNA"/>
</dbReference>
<dbReference type="EMBL" id="U62960">
    <property type="protein sequence ID" value="AAB04026.1"/>
    <property type="molecule type" value="mRNA"/>
</dbReference>
<dbReference type="RefSeq" id="XP_638375.1">
    <property type="nucleotide sequence ID" value="XM_633283.1"/>
</dbReference>
<dbReference type="SMR" id="Q23924"/>
<dbReference type="FunCoup" id="Q23924">
    <property type="interactions" value="1280"/>
</dbReference>
<dbReference type="STRING" id="44689.Q23924"/>
<dbReference type="PaxDb" id="44689-DDB0191250"/>
<dbReference type="EnsemblProtists" id="EAL65020">
    <property type="protein sequence ID" value="EAL65020"/>
    <property type="gene ID" value="DDB_G0284735"/>
</dbReference>
<dbReference type="GeneID" id="8624744"/>
<dbReference type="KEGG" id="ddi:DDB_G0284735"/>
<dbReference type="dictyBase" id="DDB_G0284735">
    <property type="gene designation" value="copB"/>
</dbReference>
<dbReference type="VEuPathDB" id="AmoebaDB:DDB_G0284735"/>
<dbReference type="eggNOG" id="KOG1058">
    <property type="taxonomic scope" value="Eukaryota"/>
</dbReference>
<dbReference type="HOGENOM" id="CLU_006949_0_0_1"/>
<dbReference type="InParanoid" id="Q23924"/>
<dbReference type="OMA" id="IYKNFDW"/>
<dbReference type="PhylomeDB" id="Q23924"/>
<dbReference type="Reactome" id="R-DDI-6798695">
    <property type="pathway name" value="Neutrophil degranulation"/>
</dbReference>
<dbReference type="Reactome" id="R-DDI-6807878">
    <property type="pathway name" value="COPI-mediated anterograde transport"/>
</dbReference>
<dbReference type="Reactome" id="R-DDI-6811434">
    <property type="pathway name" value="COPI-dependent Golgi-to-ER retrograde traffic"/>
</dbReference>
<dbReference type="PRO" id="PR:Q23924"/>
<dbReference type="Proteomes" id="UP000002195">
    <property type="component" value="Chromosome 4"/>
</dbReference>
<dbReference type="GO" id="GO:0030126">
    <property type="term" value="C:COPI vesicle coat"/>
    <property type="evidence" value="ECO:0000318"/>
    <property type="project" value="GO_Central"/>
</dbReference>
<dbReference type="GO" id="GO:0005794">
    <property type="term" value="C:Golgi apparatus"/>
    <property type="evidence" value="ECO:0000314"/>
    <property type="project" value="dictyBase"/>
</dbReference>
<dbReference type="GO" id="GO:0000139">
    <property type="term" value="C:Golgi membrane"/>
    <property type="evidence" value="ECO:0007669"/>
    <property type="project" value="UniProtKB-SubCell"/>
</dbReference>
<dbReference type="GO" id="GO:0048471">
    <property type="term" value="C:perinuclear region of cytoplasm"/>
    <property type="evidence" value="ECO:0000314"/>
    <property type="project" value="dictyBase"/>
</dbReference>
<dbReference type="GO" id="GO:0005198">
    <property type="term" value="F:structural molecule activity"/>
    <property type="evidence" value="ECO:0007669"/>
    <property type="project" value="InterPro"/>
</dbReference>
<dbReference type="GO" id="GO:0006888">
    <property type="term" value="P:endoplasmic reticulum to Golgi vesicle-mediated transport"/>
    <property type="evidence" value="ECO:0000318"/>
    <property type="project" value="GO_Central"/>
</dbReference>
<dbReference type="GO" id="GO:0006891">
    <property type="term" value="P:intra-Golgi vesicle-mediated transport"/>
    <property type="evidence" value="ECO:0000318"/>
    <property type="project" value="GO_Central"/>
</dbReference>
<dbReference type="GO" id="GO:0006886">
    <property type="term" value="P:intracellular protein transport"/>
    <property type="evidence" value="ECO:0007669"/>
    <property type="project" value="InterPro"/>
</dbReference>
<dbReference type="FunFam" id="1.25.10.10:FF:000444">
    <property type="entry name" value="Coatomer subunit beta"/>
    <property type="match status" value="1"/>
</dbReference>
<dbReference type="Gene3D" id="1.25.10.10">
    <property type="entry name" value="Leucine-rich Repeat Variant"/>
    <property type="match status" value="1"/>
</dbReference>
<dbReference type="InterPro" id="IPR011989">
    <property type="entry name" value="ARM-like"/>
</dbReference>
<dbReference type="InterPro" id="IPR016024">
    <property type="entry name" value="ARM-type_fold"/>
</dbReference>
<dbReference type="InterPro" id="IPR002553">
    <property type="entry name" value="Clathrin/coatomer_adapt-like_N"/>
</dbReference>
<dbReference type="InterPro" id="IPR011710">
    <property type="entry name" value="Coatomer_bsu_C"/>
</dbReference>
<dbReference type="InterPro" id="IPR016460">
    <property type="entry name" value="COPB1"/>
</dbReference>
<dbReference type="InterPro" id="IPR029446">
    <property type="entry name" value="COPB1_appendage_platform_dom"/>
</dbReference>
<dbReference type="PANTHER" id="PTHR10635">
    <property type="entry name" value="COATOMER SUBUNIT BETA"/>
    <property type="match status" value="1"/>
</dbReference>
<dbReference type="PANTHER" id="PTHR10635:SF0">
    <property type="entry name" value="COATOMER SUBUNIT BETA"/>
    <property type="match status" value="1"/>
</dbReference>
<dbReference type="Pfam" id="PF01602">
    <property type="entry name" value="Adaptin_N"/>
    <property type="match status" value="1"/>
</dbReference>
<dbReference type="Pfam" id="PF07718">
    <property type="entry name" value="Coatamer_beta_C"/>
    <property type="match status" value="1"/>
</dbReference>
<dbReference type="Pfam" id="PF14806">
    <property type="entry name" value="Coatomer_b_Cpla"/>
    <property type="match status" value="1"/>
</dbReference>
<dbReference type="PIRSF" id="PIRSF005727">
    <property type="entry name" value="Coatomer_beta_subunit"/>
    <property type="match status" value="1"/>
</dbReference>
<dbReference type="SUPFAM" id="SSF48371">
    <property type="entry name" value="ARM repeat"/>
    <property type="match status" value="1"/>
</dbReference>
<evidence type="ECO:0000250" key="1"/>
<evidence type="ECO:0000269" key="2">
    <source>
    </source>
</evidence>
<organism>
    <name type="scientific">Dictyostelium discoideum</name>
    <name type="common">Social amoeba</name>
    <dbReference type="NCBI Taxonomy" id="44689"/>
    <lineage>
        <taxon>Eukaryota</taxon>
        <taxon>Amoebozoa</taxon>
        <taxon>Evosea</taxon>
        <taxon>Eumycetozoa</taxon>
        <taxon>Dictyostelia</taxon>
        <taxon>Dictyosteliales</taxon>
        <taxon>Dictyosteliaceae</taxon>
        <taxon>Dictyostelium</taxon>
    </lineage>
</organism>
<proteinExistence type="evidence at transcript level"/>
<reference key="1">
    <citation type="journal article" date="2000" name="Eur. J. Cell Biol.">
        <title>Cloning and characterization of beta-COP from Dictyostelium discoideum.</title>
        <authorList>
            <person name="Mohrs M.R."/>
            <person name="Janssen K.-P."/>
            <person name="Kreis T."/>
            <person name="Noegel A.A."/>
            <person name="Schleicher M."/>
        </authorList>
    </citation>
    <scope>NUCLEOTIDE SEQUENCE [MRNA]</scope>
    <scope>SUBCELLULAR LOCATION</scope>
</reference>
<reference key="2">
    <citation type="journal article" date="2005" name="Nature">
        <title>The genome of the social amoeba Dictyostelium discoideum.</title>
        <authorList>
            <person name="Eichinger L."/>
            <person name="Pachebat J.A."/>
            <person name="Gloeckner G."/>
            <person name="Rajandream M.A."/>
            <person name="Sucgang R."/>
            <person name="Berriman M."/>
            <person name="Song J."/>
            <person name="Olsen R."/>
            <person name="Szafranski K."/>
            <person name="Xu Q."/>
            <person name="Tunggal B."/>
            <person name="Kummerfeld S."/>
            <person name="Madera M."/>
            <person name="Konfortov B.A."/>
            <person name="Rivero F."/>
            <person name="Bankier A.T."/>
            <person name="Lehmann R."/>
            <person name="Hamlin N."/>
            <person name="Davies R."/>
            <person name="Gaudet P."/>
            <person name="Fey P."/>
            <person name="Pilcher K."/>
            <person name="Chen G."/>
            <person name="Saunders D."/>
            <person name="Sodergren E.J."/>
            <person name="Davis P."/>
            <person name="Kerhornou A."/>
            <person name="Nie X."/>
            <person name="Hall N."/>
            <person name="Anjard C."/>
            <person name="Hemphill L."/>
            <person name="Bason N."/>
            <person name="Farbrother P."/>
            <person name="Desany B."/>
            <person name="Just E."/>
            <person name="Morio T."/>
            <person name="Rost R."/>
            <person name="Churcher C.M."/>
            <person name="Cooper J."/>
            <person name="Haydock S."/>
            <person name="van Driessche N."/>
            <person name="Cronin A."/>
            <person name="Goodhead I."/>
            <person name="Muzny D.M."/>
            <person name="Mourier T."/>
            <person name="Pain A."/>
            <person name="Lu M."/>
            <person name="Harper D."/>
            <person name="Lindsay R."/>
            <person name="Hauser H."/>
            <person name="James K.D."/>
            <person name="Quiles M."/>
            <person name="Madan Babu M."/>
            <person name="Saito T."/>
            <person name="Buchrieser C."/>
            <person name="Wardroper A."/>
            <person name="Felder M."/>
            <person name="Thangavelu M."/>
            <person name="Johnson D."/>
            <person name="Knights A."/>
            <person name="Loulseged H."/>
            <person name="Mungall K.L."/>
            <person name="Oliver K."/>
            <person name="Price C."/>
            <person name="Quail M.A."/>
            <person name="Urushihara H."/>
            <person name="Hernandez J."/>
            <person name="Rabbinowitsch E."/>
            <person name="Steffen D."/>
            <person name="Sanders M."/>
            <person name="Ma J."/>
            <person name="Kohara Y."/>
            <person name="Sharp S."/>
            <person name="Simmonds M.N."/>
            <person name="Spiegler S."/>
            <person name="Tivey A."/>
            <person name="Sugano S."/>
            <person name="White B."/>
            <person name="Walker D."/>
            <person name="Woodward J.R."/>
            <person name="Winckler T."/>
            <person name="Tanaka Y."/>
            <person name="Shaulsky G."/>
            <person name="Schleicher M."/>
            <person name="Weinstock G.M."/>
            <person name="Rosenthal A."/>
            <person name="Cox E.C."/>
            <person name="Chisholm R.L."/>
            <person name="Gibbs R.A."/>
            <person name="Loomis W.F."/>
            <person name="Platzer M."/>
            <person name="Kay R.R."/>
            <person name="Williams J.G."/>
            <person name="Dear P.H."/>
            <person name="Noegel A.A."/>
            <person name="Barrell B.G."/>
            <person name="Kuspa A."/>
        </authorList>
    </citation>
    <scope>NUCLEOTIDE SEQUENCE [LARGE SCALE GENOMIC DNA]</scope>
    <source>
        <strain>AX4</strain>
    </source>
</reference>
<reference key="3">
    <citation type="journal article" date="1996" name="Proc. Natl. Acad. Sci. U.S.A.">
        <title>Ordered yeast artificial chromosome clones representing the Dictyostelium discoideum genome.</title>
        <authorList>
            <person name="Kuspa A."/>
            <person name="Loomis W.F."/>
        </authorList>
    </citation>
    <scope>NUCLEOTIDE SEQUENCE [LARGE SCALE MRNA] OF 513-912</scope>
    <source>
        <strain>AX4</strain>
    </source>
</reference>
<name>COPB_DICDI</name>
<keyword id="KW-0963">Cytoplasm</keyword>
<keyword id="KW-0968">Cytoplasmic vesicle</keyword>
<keyword id="KW-0931">ER-Golgi transport</keyword>
<keyword id="KW-0333">Golgi apparatus</keyword>
<keyword id="KW-0472">Membrane</keyword>
<keyword id="KW-0653">Protein transport</keyword>
<keyword id="KW-1185">Reference proteome</keyword>
<keyword id="KW-0677">Repeat</keyword>
<keyword id="KW-0813">Transport</keyword>
<protein>
    <recommendedName>
        <fullName>Coatomer subunit beta</fullName>
    </recommendedName>
    <alternativeName>
        <fullName>Beta-coat protein</fullName>
        <shortName>Beta-COP</shortName>
    </alternativeName>
</protein>
<feature type="chain" id="PRO_0000193836" description="Coatomer subunit beta">
    <location>
        <begin position="1"/>
        <end position="912"/>
    </location>
</feature>
<feature type="repeat" description="HEAT 1">
    <location>
        <begin position="59"/>
        <end position="96"/>
    </location>
</feature>
<feature type="repeat" description="HEAT 2">
    <location>
        <begin position="100"/>
        <end position="135"/>
    </location>
</feature>
<feature type="repeat" description="HEAT 3">
    <location>
        <begin position="136"/>
        <end position="172"/>
    </location>
</feature>
<feature type="repeat" description="HEAT 4">
    <location>
        <begin position="244"/>
        <end position="281"/>
    </location>
</feature>
<feature type="repeat" description="HEAT 5">
    <location>
        <begin position="300"/>
        <end position="337"/>
    </location>
</feature>
<feature type="repeat" description="HEAT 6">
    <location>
        <begin position="339"/>
        <end position="375"/>
    </location>
</feature>
<feature type="repeat" description="HEAT 7">
    <location>
        <begin position="397"/>
        <end position="434"/>
    </location>
</feature>
<feature type="repeat" description="HEAT 8">
    <location>
        <begin position="441"/>
        <end position="479"/>
    </location>
</feature>
<feature type="repeat" description="HEAT 9">
    <location>
        <begin position="550"/>
        <end position="575"/>
    </location>
</feature>
<feature type="repeat" description="HEAT 10">
    <location>
        <begin position="576"/>
        <end position="612"/>
    </location>
</feature>